<keyword id="KW-0067">ATP-binding</keyword>
<keyword id="KW-0315">Glutamine amidotransferase</keyword>
<keyword id="KW-0332">GMP biosynthesis</keyword>
<keyword id="KW-0436">Ligase</keyword>
<keyword id="KW-0547">Nucleotide-binding</keyword>
<keyword id="KW-0658">Purine biosynthesis</keyword>
<keyword id="KW-1185">Reference proteome</keyword>
<feature type="chain" id="PRO_0000140095" description="Putative GMP synthase [glutamine-hydrolyzing] 2">
    <location>
        <begin position="1"/>
        <end position="435"/>
    </location>
</feature>
<feature type="domain" description="Glutamine amidotransferase type-1; truncated">
    <location>
        <begin position="1"/>
        <end position="120"/>
    </location>
</feature>
<feature type="domain" description="GMPS ATP-PPase" evidence="2">
    <location>
        <begin position="121"/>
        <end position="310"/>
    </location>
</feature>
<feature type="binding site" evidence="2">
    <location>
        <begin position="148"/>
        <end position="154"/>
    </location>
    <ligand>
        <name>ATP</name>
        <dbReference type="ChEBI" id="CHEBI:30616"/>
    </ligand>
</feature>
<proteinExistence type="uncertain"/>
<dbReference type="EC" id="6.3.5.2"/>
<dbReference type="EMBL" id="AE015928">
    <property type="protein sequence ID" value="AAO77526.1"/>
    <property type="molecule type" value="Genomic_DNA"/>
</dbReference>
<dbReference type="RefSeq" id="NP_811332.1">
    <property type="nucleotide sequence ID" value="NC_004663.1"/>
</dbReference>
<dbReference type="SMR" id="Q8A525"/>
<dbReference type="STRING" id="226186.BT_2419"/>
<dbReference type="PaxDb" id="226186-BT_2419"/>
<dbReference type="EnsemblBacteria" id="AAO77526">
    <property type="protein sequence ID" value="AAO77526"/>
    <property type="gene ID" value="BT_2419"/>
</dbReference>
<dbReference type="KEGG" id="bth:BT_2419"/>
<dbReference type="PATRIC" id="fig|226186.12.peg.2480"/>
<dbReference type="eggNOG" id="COG0519">
    <property type="taxonomic scope" value="Bacteria"/>
</dbReference>
<dbReference type="HOGENOM" id="CLU_014340_0_5_10"/>
<dbReference type="InParanoid" id="Q8A525"/>
<dbReference type="OrthoDB" id="9802219at2"/>
<dbReference type="UniPathway" id="UPA00189">
    <property type="reaction ID" value="UER00296"/>
</dbReference>
<dbReference type="Proteomes" id="UP000001414">
    <property type="component" value="Chromosome"/>
</dbReference>
<dbReference type="GO" id="GO:0005829">
    <property type="term" value="C:cytosol"/>
    <property type="evidence" value="ECO:0000318"/>
    <property type="project" value="GO_Central"/>
</dbReference>
<dbReference type="GO" id="GO:0005524">
    <property type="term" value="F:ATP binding"/>
    <property type="evidence" value="ECO:0007669"/>
    <property type="project" value="UniProtKB-KW"/>
</dbReference>
<dbReference type="GO" id="GO:0003921">
    <property type="term" value="F:GMP synthase activity"/>
    <property type="evidence" value="ECO:0000318"/>
    <property type="project" value="GO_Central"/>
</dbReference>
<dbReference type="GO" id="GO:0006177">
    <property type="term" value="P:GMP biosynthetic process"/>
    <property type="evidence" value="ECO:0000318"/>
    <property type="project" value="GO_Central"/>
</dbReference>
<dbReference type="CDD" id="cd01997">
    <property type="entry name" value="GMP_synthase_C"/>
    <property type="match status" value="1"/>
</dbReference>
<dbReference type="FunFam" id="3.30.300.10:FF:000002">
    <property type="entry name" value="GMP synthase [glutamine-hydrolyzing]"/>
    <property type="match status" value="1"/>
</dbReference>
<dbReference type="FunFam" id="3.40.50.620:FF:000001">
    <property type="entry name" value="GMP synthase [glutamine-hydrolyzing]"/>
    <property type="match status" value="1"/>
</dbReference>
<dbReference type="Gene3D" id="3.30.300.10">
    <property type="match status" value="1"/>
</dbReference>
<dbReference type="Gene3D" id="3.40.50.880">
    <property type="match status" value="1"/>
</dbReference>
<dbReference type="Gene3D" id="3.40.50.620">
    <property type="entry name" value="HUPs"/>
    <property type="match status" value="1"/>
</dbReference>
<dbReference type="InterPro" id="IPR029062">
    <property type="entry name" value="Class_I_gatase-like"/>
</dbReference>
<dbReference type="InterPro" id="IPR017926">
    <property type="entry name" value="GATASE"/>
</dbReference>
<dbReference type="InterPro" id="IPR001674">
    <property type="entry name" value="GMP_synth_C"/>
</dbReference>
<dbReference type="InterPro" id="IPR025777">
    <property type="entry name" value="GMPS_ATP_PPase_dom"/>
</dbReference>
<dbReference type="InterPro" id="IPR022310">
    <property type="entry name" value="NAD/GMP_synthase"/>
</dbReference>
<dbReference type="InterPro" id="IPR014729">
    <property type="entry name" value="Rossmann-like_a/b/a_fold"/>
</dbReference>
<dbReference type="NCBIfam" id="TIGR00884">
    <property type="entry name" value="guaA_Cterm"/>
    <property type="match status" value="1"/>
</dbReference>
<dbReference type="NCBIfam" id="NF000848">
    <property type="entry name" value="PRK00074.1"/>
    <property type="match status" value="1"/>
</dbReference>
<dbReference type="PANTHER" id="PTHR11922:SF2">
    <property type="entry name" value="GMP SYNTHASE [GLUTAMINE-HYDROLYZING]"/>
    <property type="match status" value="1"/>
</dbReference>
<dbReference type="PANTHER" id="PTHR11922">
    <property type="entry name" value="GMP SYNTHASE-RELATED"/>
    <property type="match status" value="1"/>
</dbReference>
<dbReference type="Pfam" id="PF00117">
    <property type="entry name" value="GATase"/>
    <property type="match status" value="1"/>
</dbReference>
<dbReference type="Pfam" id="PF00958">
    <property type="entry name" value="GMP_synt_C"/>
    <property type="match status" value="1"/>
</dbReference>
<dbReference type="Pfam" id="PF02540">
    <property type="entry name" value="NAD_synthase"/>
    <property type="match status" value="1"/>
</dbReference>
<dbReference type="SUPFAM" id="SSF52402">
    <property type="entry name" value="Adenine nucleotide alpha hydrolases-like"/>
    <property type="match status" value="1"/>
</dbReference>
<dbReference type="SUPFAM" id="SSF52317">
    <property type="entry name" value="Class I glutamine amidotransferase-like"/>
    <property type="match status" value="1"/>
</dbReference>
<dbReference type="PROSITE" id="PS51553">
    <property type="entry name" value="GMPS_ATP_PPASE"/>
    <property type="match status" value="1"/>
</dbReference>
<protein>
    <recommendedName>
        <fullName>Putative GMP synthase [glutamine-hydrolyzing] 2</fullName>
        <ecNumber>6.3.5.2</ecNumber>
    </recommendedName>
    <alternativeName>
        <fullName>GMP synthetase 2</fullName>
    </alternativeName>
    <alternativeName>
        <fullName>Glutamine amidotransferase 2</fullName>
    </alternativeName>
</protein>
<organism>
    <name type="scientific">Bacteroides thetaiotaomicron (strain ATCC 29148 / DSM 2079 / JCM 5827 / CCUG 10774 / NCTC 10582 / VPI-5482 / E50)</name>
    <dbReference type="NCBI Taxonomy" id="226186"/>
    <lineage>
        <taxon>Bacteria</taxon>
        <taxon>Pseudomonadati</taxon>
        <taxon>Bacteroidota</taxon>
        <taxon>Bacteroidia</taxon>
        <taxon>Bacteroidales</taxon>
        <taxon>Bacteroidaceae</taxon>
        <taxon>Bacteroides</taxon>
    </lineage>
</organism>
<name>GUAA2_BACTN</name>
<accession>Q8A525</accession>
<comment type="function">
    <text evidence="1">Catalyzes the synthesis of GMP from XMP.</text>
</comment>
<comment type="catalytic activity">
    <reaction>
        <text>XMP + L-glutamine + ATP + H2O = GMP + L-glutamate + AMP + diphosphate + 2 H(+)</text>
        <dbReference type="Rhea" id="RHEA:11680"/>
        <dbReference type="ChEBI" id="CHEBI:15377"/>
        <dbReference type="ChEBI" id="CHEBI:15378"/>
        <dbReference type="ChEBI" id="CHEBI:29985"/>
        <dbReference type="ChEBI" id="CHEBI:30616"/>
        <dbReference type="ChEBI" id="CHEBI:33019"/>
        <dbReference type="ChEBI" id="CHEBI:57464"/>
        <dbReference type="ChEBI" id="CHEBI:58115"/>
        <dbReference type="ChEBI" id="CHEBI:58359"/>
        <dbReference type="ChEBI" id="CHEBI:456215"/>
        <dbReference type="EC" id="6.3.5.2"/>
    </reaction>
</comment>
<comment type="pathway">
    <text>Purine metabolism; GMP biosynthesis; GMP from XMP (L-Gln route): step 1/1.</text>
</comment>
<comment type="subunit">
    <text evidence="1">Homodimer.</text>
</comment>
<comment type="caution">
    <text evidence="3">Could be the product of a pseudogene. Contains an internal deletion relative to its orthologs.</text>
</comment>
<gene>
    <name type="primary">guaA2</name>
    <name type="ordered locus">BT_2419</name>
</gene>
<reference key="1">
    <citation type="journal article" date="2003" name="Science">
        <title>A genomic view of the human-Bacteroides thetaiotaomicron symbiosis.</title>
        <authorList>
            <person name="Xu J."/>
            <person name="Bjursell M.K."/>
            <person name="Himrod J."/>
            <person name="Deng S."/>
            <person name="Carmichael L.K."/>
            <person name="Chiang H.C."/>
            <person name="Hooper L.V."/>
            <person name="Gordon J.I."/>
        </authorList>
    </citation>
    <scope>NUCLEOTIDE SEQUENCE [LARGE SCALE GENOMIC DNA]</scope>
    <source>
        <strain>ATCC 29148 / DSM 2079 / JCM 5827 / CCUG 10774 / NCTC 10582 / VPI-5482 / E50</strain>
    </source>
</reference>
<sequence>MKQDMIVILDLGSHENTVLARAIRALGVYSEIYPHDITVEELKALPNVKGIIINGGLNNVIDGVAIDVNPSIYTMGIPVMAAGHDKATCAVKLPAFTDDIEAIKAAIKSFVFDTCQAEANWNMANFVNDQIELIRRQVGDKKVLLALSGGVDSSVVAALLLKAIGENLVCVHVNHGLMRKGESEDVVEVFSNQLKANLVYVDVTDRFLDKLAGVEDPEQKRKIIGGEFIRVFEEEARKLDGIDFLGQGTIYPDIVESGTKTAKMVKSHHNVGGLPEDLKFQLVEPLRQLFKDEVRACGLELGLPYEMVYRQPFPGPGLGVRCLGAITRDRLEAVRESDAILREEFQIAGLDKKVWQYFTVVPDFKSVGVRDNARSFDWPVIIRAVNTVDAMTATIEPVDWPILMKITDRILKEVKNVNRVCYDMSPKPNATIEWE</sequence>
<evidence type="ECO:0000250" key="1"/>
<evidence type="ECO:0000255" key="2">
    <source>
        <dbReference type="PROSITE-ProRule" id="PRU00886"/>
    </source>
</evidence>
<evidence type="ECO:0000305" key="3"/>